<protein>
    <recommendedName>
        <fullName>Enolase 2</fullName>
        <ecNumber>4.2.1.11</ecNumber>
    </recommendedName>
    <alternativeName>
        <fullName>2-phospho-D-glycerate hydro-lyase 2</fullName>
    </alternativeName>
    <alternativeName>
        <fullName>2-phosphoglycerate dehydratase 2</fullName>
    </alternativeName>
    <allergenName>Hev b 9</allergenName>
</protein>
<comment type="catalytic activity">
    <reaction>
        <text>(2R)-2-phosphoglycerate = phosphoenolpyruvate + H2O</text>
        <dbReference type="Rhea" id="RHEA:10164"/>
        <dbReference type="ChEBI" id="CHEBI:15377"/>
        <dbReference type="ChEBI" id="CHEBI:58289"/>
        <dbReference type="ChEBI" id="CHEBI:58702"/>
        <dbReference type="EC" id="4.2.1.11"/>
    </reaction>
</comment>
<comment type="cofactor">
    <cofactor evidence="1">
        <name>Mg(2+)</name>
        <dbReference type="ChEBI" id="CHEBI:18420"/>
    </cofactor>
    <text evidence="1">Mg(2+) is required for catalysis and for stabilizing the dimer.</text>
</comment>
<comment type="pathway">
    <text>Carbohydrate degradation; glycolysis; pyruvate from D-glyceraldehyde 3-phosphate: step 4/5.</text>
</comment>
<comment type="subunit">
    <text evidence="1">Homodimer.</text>
</comment>
<comment type="subcellular location">
    <subcellularLocation>
        <location>Cytoplasm</location>
    </subcellularLocation>
</comment>
<comment type="allergen">
    <text evidence="2">Causes an allergic reaction in human. Involved in latex allergic reactions.</text>
</comment>
<comment type="similarity">
    <text evidence="3">Belongs to the enolase family.</text>
</comment>
<sequence>MAITIVSVRARQIFDSRGNPTVEADVKLSDGYLARAAVPRGASTGIYEALELRDGGSDYLGKGVSKAVENVNIIIGPALVGKDPTDQVGIDNFMVQQLDGTVNEWGWCKQKLGANAILAVSLAVCKAGAHVKGIPLYKHVANLAGNKNLVLPVPAFNVINGGSHAGNKLAMQEFMILPVGASSFKEAMKMGAEVYHHLKSVIKKKYGQDATNVGDEGGFAPNIQENKEGLELLKTAIAKAGYTGKVVIGMDVAASEFYGSDKTYDLNFKEENNNGSQKISGDVLKDLYKSFVTEYPIVSIEDPFDQDDWEHYAKLTSEIGVKVQIVGDDLLVTNPKRVEKAIKEKACNALLLKVNQIGSVTESIEAVKMSKRAGWGVMASHRSGETEDTFIADLSVGLATGQIKTGAPCRSERLAKYNQLLRIEEELGAEAVYAGANFRTPVEPY</sequence>
<proteinExistence type="evidence at protein level"/>
<evidence type="ECO:0000250" key="1"/>
<evidence type="ECO:0000269" key="2">
    <source>
    </source>
</evidence>
<evidence type="ECO:0000305" key="3"/>
<gene>
    <name type="primary">ENO2</name>
</gene>
<accession>Q9LEI9</accession>
<keyword id="KW-0020">Allergen</keyword>
<keyword id="KW-0963">Cytoplasm</keyword>
<keyword id="KW-0324">Glycolysis</keyword>
<keyword id="KW-0456">Lyase</keyword>
<keyword id="KW-0460">Magnesium</keyword>
<keyword id="KW-0479">Metal-binding</keyword>
<reference key="1">
    <citation type="journal article" date="2000" name="Eur. J. Biochem.">
        <title>Hev b 9, an enolase and a new cross-reactive allergen from hevea latex and molds. Purification, characterization, cloning and expression.</title>
        <authorList>
            <person name="Wagner S."/>
            <person name="Breiteneder H."/>
            <person name="Simon-Nobbe B."/>
            <person name="Susani M."/>
            <person name="Krebitz M."/>
            <person name="Niggemann B."/>
            <person name="Brehler R."/>
            <person name="Scheiner O."/>
            <person name="Hoffmann-Sommergruber K."/>
        </authorList>
    </citation>
    <scope>NUCLEOTIDE SEQUENCE [MRNA]</scope>
    <scope>ALLERGEN</scope>
    <source>
        <tissue>Latex</tissue>
    </source>
</reference>
<organism>
    <name type="scientific">Hevea brasiliensis</name>
    <name type="common">Para rubber tree</name>
    <name type="synonym">Siphonia brasiliensis</name>
    <dbReference type="NCBI Taxonomy" id="3981"/>
    <lineage>
        <taxon>Eukaryota</taxon>
        <taxon>Viridiplantae</taxon>
        <taxon>Streptophyta</taxon>
        <taxon>Embryophyta</taxon>
        <taxon>Tracheophyta</taxon>
        <taxon>Spermatophyta</taxon>
        <taxon>Magnoliopsida</taxon>
        <taxon>eudicotyledons</taxon>
        <taxon>Gunneridae</taxon>
        <taxon>Pentapetalae</taxon>
        <taxon>rosids</taxon>
        <taxon>fabids</taxon>
        <taxon>Malpighiales</taxon>
        <taxon>Euphorbiaceae</taxon>
        <taxon>Crotonoideae</taxon>
        <taxon>Micrandreae</taxon>
        <taxon>Hevea</taxon>
    </lineage>
</organism>
<dbReference type="EC" id="4.2.1.11"/>
<dbReference type="EMBL" id="AJ132581">
    <property type="protein sequence ID" value="CAC00533.1"/>
    <property type="molecule type" value="mRNA"/>
</dbReference>
<dbReference type="SMR" id="Q9LEI9"/>
<dbReference type="Allergome" id="3317">
    <property type="allergen name" value="Hev b 9.0101"/>
</dbReference>
<dbReference type="Allergome" id="404">
    <property type="allergen name" value="Hev b 9"/>
</dbReference>
<dbReference type="UniPathway" id="UPA00109">
    <property type="reaction ID" value="UER00187"/>
</dbReference>
<dbReference type="GO" id="GO:0000015">
    <property type="term" value="C:phosphopyruvate hydratase complex"/>
    <property type="evidence" value="ECO:0007669"/>
    <property type="project" value="InterPro"/>
</dbReference>
<dbReference type="GO" id="GO:0000287">
    <property type="term" value="F:magnesium ion binding"/>
    <property type="evidence" value="ECO:0007669"/>
    <property type="project" value="InterPro"/>
</dbReference>
<dbReference type="GO" id="GO:0004634">
    <property type="term" value="F:phosphopyruvate hydratase activity"/>
    <property type="evidence" value="ECO:0007669"/>
    <property type="project" value="UniProtKB-EC"/>
</dbReference>
<dbReference type="GO" id="GO:0006096">
    <property type="term" value="P:glycolytic process"/>
    <property type="evidence" value="ECO:0007669"/>
    <property type="project" value="UniProtKB-UniPathway"/>
</dbReference>
<dbReference type="CDD" id="cd03313">
    <property type="entry name" value="enolase"/>
    <property type="match status" value="1"/>
</dbReference>
<dbReference type="FunFam" id="3.20.20.120:FF:000002">
    <property type="entry name" value="Enolase 1"/>
    <property type="match status" value="1"/>
</dbReference>
<dbReference type="Gene3D" id="3.20.20.120">
    <property type="entry name" value="Enolase-like C-terminal domain"/>
    <property type="match status" value="1"/>
</dbReference>
<dbReference type="Gene3D" id="3.30.390.10">
    <property type="entry name" value="Enolase-like, N-terminal domain"/>
    <property type="match status" value="1"/>
</dbReference>
<dbReference type="HAMAP" id="MF_00318">
    <property type="entry name" value="Enolase"/>
    <property type="match status" value="1"/>
</dbReference>
<dbReference type="InterPro" id="IPR000941">
    <property type="entry name" value="Enolase"/>
</dbReference>
<dbReference type="InterPro" id="IPR036849">
    <property type="entry name" value="Enolase-like_C_sf"/>
</dbReference>
<dbReference type="InterPro" id="IPR029017">
    <property type="entry name" value="Enolase-like_N"/>
</dbReference>
<dbReference type="InterPro" id="IPR020810">
    <property type="entry name" value="Enolase_C"/>
</dbReference>
<dbReference type="InterPro" id="IPR020809">
    <property type="entry name" value="Enolase_CS"/>
</dbReference>
<dbReference type="InterPro" id="IPR020811">
    <property type="entry name" value="Enolase_N"/>
</dbReference>
<dbReference type="NCBIfam" id="TIGR01060">
    <property type="entry name" value="eno"/>
    <property type="match status" value="1"/>
</dbReference>
<dbReference type="PANTHER" id="PTHR11902">
    <property type="entry name" value="ENOLASE"/>
    <property type="match status" value="1"/>
</dbReference>
<dbReference type="PANTHER" id="PTHR11902:SF1">
    <property type="entry name" value="ENOLASE"/>
    <property type="match status" value="1"/>
</dbReference>
<dbReference type="Pfam" id="PF00113">
    <property type="entry name" value="Enolase_C"/>
    <property type="match status" value="1"/>
</dbReference>
<dbReference type="Pfam" id="PF03952">
    <property type="entry name" value="Enolase_N"/>
    <property type="match status" value="1"/>
</dbReference>
<dbReference type="PIRSF" id="PIRSF001400">
    <property type="entry name" value="Enolase"/>
    <property type="match status" value="1"/>
</dbReference>
<dbReference type="PRINTS" id="PR00148">
    <property type="entry name" value="ENOLASE"/>
</dbReference>
<dbReference type="SFLD" id="SFLDS00001">
    <property type="entry name" value="Enolase"/>
    <property type="match status" value="1"/>
</dbReference>
<dbReference type="SFLD" id="SFLDF00002">
    <property type="entry name" value="enolase"/>
    <property type="match status" value="1"/>
</dbReference>
<dbReference type="SMART" id="SM01192">
    <property type="entry name" value="Enolase_C"/>
    <property type="match status" value="1"/>
</dbReference>
<dbReference type="SMART" id="SM01193">
    <property type="entry name" value="Enolase_N"/>
    <property type="match status" value="1"/>
</dbReference>
<dbReference type="SUPFAM" id="SSF51604">
    <property type="entry name" value="Enolase C-terminal domain-like"/>
    <property type="match status" value="1"/>
</dbReference>
<dbReference type="SUPFAM" id="SSF54826">
    <property type="entry name" value="Enolase N-terminal domain-like"/>
    <property type="match status" value="1"/>
</dbReference>
<dbReference type="PROSITE" id="PS00164">
    <property type="entry name" value="ENOLASE"/>
    <property type="match status" value="1"/>
</dbReference>
<name>ENO2_HEVBR</name>
<feature type="chain" id="PRO_0000134070" description="Enolase 2">
    <location>
        <begin position="1"/>
        <end position="445"/>
    </location>
</feature>
<feature type="active site" description="Proton donor" evidence="1">
    <location>
        <position position="216"/>
    </location>
</feature>
<feature type="active site" description="Proton acceptor" evidence="1">
    <location>
        <position position="353"/>
    </location>
</feature>
<feature type="binding site" evidence="1">
    <location>
        <position position="164"/>
    </location>
    <ligand>
        <name>substrate</name>
    </ligand>
</feature>
<feature type="binding site" evidence="1">
    <location>
        <position position="173"/>
    </location>
    <ligand>
        <name>substrate</name>
    </ligand>
</feature>
<feature type="binding site" evidence="1">
    <location>
        <position position="251"/>
    </location>
    <ligand>
        <name>Mg(2+)</name>
        <dbReference type="ChEBI" id="CHEBI:18420"/>
    </ligand>
</feature>
<feature type="binding site" evidence="1">
    <location>
        <position position="301"/>
    </location>
    <ligand>
        <name>Mg(2+)</name>
        <dbReference type="ChEBI" id="CHEBI:18420"/>
    </ligand>
</feature>
<feature type="binding site" evidence="1">
    <location>
        <position position="301"/>
    </location>
    <ligand>
        <name>substrate</name>
    </ligand>
</feature>
<feature type="binding site" evidence="1">
    <location>
        <position position="328"/>
    </location>
    <ligand>
        <name>Mg(2+)</name>
        <dbReference type="ChEBI" id="CHEBI:18420"/>
    </ligand>
</feature>
<feature type="binding site" evidence="1">
    <location>
        <position position="328"/>
    </location>
    <ligand>
        <name>substrate</name>
    </ligand>
</feature>
<feature type="binding site" evidence="1">
    <location>
        <begin position="380"/>
        <end position="383"/>
    </location>
    <ligand>
        <name>substrate</name>
    </ligand>
</feature>
<feature type="binding site" evidence="1">
    <location>
        <position position="404"/>
    </location>
    <ligand>
        <name>substrate</name>
    </ligand>
</feature>